<feature type="chain" id="PRO_0000067755" description="DNA-directed RNA polymerase subunit beta'">
    <location>
        <begin position="1"/>
        <end position="1053" status="greater than"/>
    </location>
</feature>
<feature type="binding site" evidence="1">
    <location>
        <position position="60"/>
    </location>
    <ligand>
        <name>Zn(2+)</name>
        <dbReference type="ChEBI" id="CHEBI:29105"/>
        <label>1</label>
    </ligand>
</feature>
<feature type="binding site" evidence="1">
    <location>
        <position position="62"/>
    </location>
    <ligand>
        <name>Zn(2+)</name>
        <dbReference type="ChEBI" id="CHEBI:29105"/>
        <label>1</label>
    </ligand>
</feature>
<feature type="binding site" evidence="1">
    <location>
        <position position="75"/>
    </location>
    <ligand>
        <name>Zn(2+)</name>
        <dbReference type="ChEBI" id="CHEBI:29105"/>
        <label>1</label>
    </ligand>
</feature>
<feature type="binding site" evidence="1">
    <location>
        <position position="78"/>
    </location>
    <ligand>
        <name>Zn(2+)</name>
        <dbReference type="ChEBI" id="CHEBI:29105"/>
        <label>1</label>
    </ligand>
</feature>
<feature type="binding site" evidence="1">
    <location>
        <position position="449"/>
    </location>
    <ligand>
        <name>Mg(2+)</name>
        <dbReference type="ChEBI" id="CHEBI:18420"/>
    </ligand>
</feature>
<feature type="binding site" evidence="1">
    <location>
        <position position="451"/>
    </location>
    <ligand>
        <name>Mg(2+)</name>
        <dbReference type="ChEBI" id="CHEBI:18420"/>
    </ligand>
</feature>
<feature type="binding site" evidence="1">
    <location>
        <position position="453"/>
    </location>
    <ligand>
        <name>Mg(2+)</name>
        <dbReference type="ChEBI" id="CHEBI:18420"/>
    </ligand>
</feature>
<feature type="binding site" evidence="1">
    <location>
        <position position="818"/>
    </location>
    <ligand>
        <name>Zn(2+)</name>
        <dbReference type="ChEBI" id="CHEBI:29105"/>
        <label>2</label>
    </ligand>
</feature>
<feature type="binding site" evidence="1">
    <location>
        <position position="892"/>
    </location>
    <ligand>
        <name>Zn(2+)</name>
        <dbReference type="ChEBI" id="CHEBI:29105"/>
        <label>2</label>
    </ligand>
</feature>
<feature type="binding site" evidence="1">
    <location>
        <position position="899"/>
    </location>
    <ligand>
        <name>Zn(2+)</name>
        <dbReference type="ChEBI" id="CHEBI:29105"/>
        <label>2</label>
    </ligand>
</feature>
<feature type="binding site" evidence="1">
    <location>
        <position position="902"/>
    </location>
    <ligand>
        <name>Zn(2+)</name>
        <dbReference type="ChEBI" id="CHEBI:29105"/>
        <label>2</label>
    </ligand>
</feature>
<feature type="non-terminal residue">
    <location>
        <position position="1053"/>
    </location>
</feature>
<evidence type="ECO:0000255" key="1">
    <source>
        <dbReference type="HAMAP-Rule" id="MF_01322"/>
    </source>
</evidence>
<organism>
    <name type="scientific">Listeria grayi</name>
    <name type="common">Listeria murrayi</name>
    <dbReference type="NCBI Taxonomy" id="1641"/>
    <lineage>
        <taxon>Bacteria</taxon>
        <taxon>Bacillati</taxon>
        <taxon>Bacillota</taxon>
        <taxon>Bacilli</taxon>
        <taxon>Bacillales</taxon>
        <taxon>Listeriaceae</taxon>
        <taxon>Listeria</taxon>
    </lineage>
</organism>
<proteinExistence type="inferred from homology"/>
<sequence length="1053" mass="118564">MLDVNNFEYMKIGLASPDKIRSWSHGEVKKPETINYRTLKPERDGLFCERIFGPMKDWECSCGKYKRVRYKGVVCDRCGVEVTKSKVRRERMGHIELAAPVSHIWYFKGIPSRMGLVMDMSPRALEEIIYFASYVVTEPGDTPLEKKQLLSEKEYRVYREKYGKNFHAGMGAEAIKKILSDIDLEKETQELKAELQTAQGQRRTRAIRRLEVMEAFRNSGNEPSWMILDVLPVIPPEIRPMVQLEGGRFATSDLNDLYRRVINRNNRLKRLLDLGAPNIIVQNEKRMLQEAVDALIDNGRRGRPVTGPGNRPLKSLSHMLKGKQGRFRQNLLGKRVDYSGRSVIVVGPNLKMYQCGLPKEMALELFKPFIMKELVSRGLAHNIKSAKRKIERMAAEVWDVLEEVIREHPVLLNRAPTLHRLGIQAFEPTLVEGRAIRLHPLVCTAYNADFDGDQMAVHVPLSAEAQAEARLLMLAAQNILNPKDGKPVVTPSQDMVLGNYYLTLERENAVGEGLVFKDINEAMIAYTNGYVHLHSRIGVYAGSIQNERFTEEQRKQLLITTVGKLVFNTILPESFPYINEPTKYNLEIETPTKYFVDTTTDVKTHIANQPLIDPFKKGILGNIIAEVFKKFHITETSKMLDRMKDLGFKISTKAGITVGIADILTLQEKPEILEKAHDKVEKITKQFRRGLITGDERYERVIGVWNAAKDEIQNKLILSLERLNPIFMMQDSGARGNISNFTQLAGMRGLMADPSGRIVELPITSNFREGLTVLEYFISTHGARKGLTDTALKTADSGYLTRRLVDVAQDVIIREDDCGTDRGLTIKAIREGTEIIEPLEERLEGRYARKTIRHPETNEIIVKENDLITEDIAVQIIGAGIEEVSIRSAFTCNTKHGVCKKCYGKNLATGTEVEVGEAVGIIAAQSIGEPGTQLTMRTFHTGGVAGDDITQGLPRIQEIFEARNPKGQATITEVAGEVVSIEEGRDRGLEITIQGVDDRRSYTVPYTARLRVEVGSMLDRGEALTEGSIDPKALIRVRDVLSVQEYLLAEVQK</sequence>
<keyword id="KW-0240">DNA-directed RNA polymerase</keyword>
<keyword id="KW-0460">Magnesium</keyword>
<keyword id="KW-0479">Metal-binding</keyword>
<keyword id="KW-0548">Nucleotidyltransferase</keyword>
<keyword id="KW-0804">Transcription</keyword>
<keyword id="KW-0808">Transferase</keyword>
<keyword id="KW-0862">Zinc</keyword>
<protein>
    <recommendedName>
        <fullName evidence="1">DNA-directed RNA polymerase subunit beta'</fullName>
        <shortName evidence="1">RNAP subunit beta'</shortName>
        <ecNumber evidence="1">2.7.7.6</ecNumber>
    </recommendedName>
    <alternativeName>
        <fullName evidence="1">RNA polymerase subunit beta'</fullName>
    </alternativeName>
    <alternativeName>
        <fullName evidence="1">Transcriptase subunit beta'</fullName>
    </alternativeName>
</protein>
<reference key="1">
    <citation type="submission" date="1996-08" db="EMBL/GenBank/DDBJ databases">
        <title>Cloning part of the rpoC gene encoding the B' subunit of the DNA-dependent RNA polymerase from some Gram-positive bacteria and comparative amino acid sequence.</title>
        <authorList>
            <person name="Morse R."/>
            <person name="Collins M.D."/>
            <person name="Balsdon J.T."/>
            <person name="Reading S."/>
            <person name="Richardson P.T."/>
        </authorList>
    </citation>
    <scope>NUCLEOTIDE SEQUENCE [GENOMIC DNA]</scope>
    <source>
        <strain>ATCC 25401 / DSM 20596 / CIP 76124 / NCTC 10812 / NRRL B-33018 / F-9</strain>
    </source>
</reference>
<comment type="function">
    <text evidence="1">DNA-dependent RNA polymerase catalyzes the transcription of DNA into RNA using the four ribonucleoside triphosphates as substrates.</text>
</comment>
<comment type="catalytic activity">
    <reaction evidence="1">
        <text>RNA(n) + a ribonucleoside 5'-triphosphate = RNA(n+1) + diphosphate</text>
        <dbReference type="Rhea" id="RHEA:21248"/>
        <dbReference type="Rhea" id="RHEA-COMP:14527"/>
        <dbReference type="Rhea" id="RHEA-COMP:17342"/>
        <dbReference type="ChEBI" id="CHEBI:33019"/>
        <dbReference type="ChEBI" id="CHEBI:61557"/>
        <dbReference type="ChEBI" id="CHEBI:140395"/>
        <dbReference type="EC" id="2.7.7.6"/>
    </reaction>
</comment>
<comment type="cofactor">
    <cofactor evidence="1">
        <name>Mg(2+)</name>
        <dbReference type="ChEBI" id="CHEBI:18420"/>
    </cofactor>
    <text evidence="1">Binds 1 Mg(2+) ion per subunit.</text>
</comment>
<comment type="cofactor">
    <cofactor evidence="1">
        <name>Zn(2+)</name>
        <dbReference type="ChEBI" id="CHEBI:29105"/>
    </cofactor>
    <text evidence="1">Binds 2 Zn(2+) ions per subunit.</text>
</comment>
<comment type="subunit">
    <text evidence="1">The RNAP catalytic core consists of 2 alpha, 1 beta, 1 beta' and 1 omega subunit. When a sigma factor is associated with the core the holoenzyme is formed, which can initiate transcription.</text>
</comment>
<comment type="similarity">
    <text evidence="1">Belongs to the RNA polymerase beta' chain family.</text>
</comment>
<name>RPOC_LISGR</name>
<accession>P77882</accession>
<gene>
    <name evidence="1" type="primary">rpoC</name>
</gene>
<dbReference type="EC" id="2.7.7.6" evidence="1"/>
<dbReference type="EMBL" id="X89228">
    <property type="protein sequence ID" value="CAA61512.1"/>
    <property type="molecule type" value="Genomic_DNA"/>
</dbReference>
<dbReference type="PIR" id="T09645">
    <property type="entry name" value="T09645"/>
</dbReference>
<dbReference type="SMR" id="P77882"/>
<dbReference type="GO" id="GO:0000428">
    <property type="term" value="C:DNA-directed RNA polymerase complex"/>
    <property type="evidence" value="ECO:0007669"/>
    <property type="project" value="UniProtKB-KW"/>
</dbReference>
<dbReference type="GO" id="GO:0003677">
    <property type="term" value="F:DNA binding"/>
    <property type="evidence" value="ECO:0007669"/>
    <property type="project" value="InterPro"/>
</dbReference>
<dbReference type="GO" id="GO:0003899">
    <property type="term" value="F:DNA-directed RNA polymerase activity"/>
    <property type="evidence" value="ECO:0007669"/>
    <property type="project" value="UniProtKB-EC"/>
</dbReference>
<dbReference type="GO" id="GO:0046872">
    <property type="term" value="F:metal ion binding"/>
    <property type="evidence" value="ECO:0007669"/>
    <property type="project" value="UniProtKB-KW"/>
</dbReference>
<dbReference type="GO" id="GO:0006351">
    <property type="term" value="P:DNA-templated transcription"/>
    <property type="evidence" value="ECO:0007669"/>
    <property type="project" value="InterPro"/>
</dbReference>
<dbReference type="CDD" id="cd01609">
    <property type="entry name" value="RNAP_beta'_N"/>
    <property type="match status" value="1"/>
</dbReference>
<dbReference type="FunFam" id="1.10.132.30:FF:000003">
    <property type="entry name" value="DNA-directed RNA polymerase subunit beta"/>
    <property type="match status" value="1"/>
</dbReference>
<dbReference type="FunFam" id="1.10.40.90:FF:000001">
    <property type="entry name" value="DNA-directed RNA polymerase subunit beta"/>
    <property type="match status" value="1"/>
</dbReference>
<dbReference type="FunFam" id="4.10.860.120:FF:000001">
    <property type="entry name" value="DNA-directed RNA polymerase subunit beta"/>
    <property type="match status" value="1"/>
</dbReference>
<dbReference type="Gene3D" id="1.10.132.30">
    <property type="match status" value="1"/>
</dbReference>
<dbReference type="Gene3D" id="1.10.1790.20">
    <property type="match status" value="1"/>
</dbReference>
<dbReference type="Gene3D" id="1.10.40.90">
    <property type="match status" value="1"/>
</dbReference>
<dbReference type="Gene3D" id="2.40.40.20">
    <property type="match status" value="1"/>
</dbReference>
<dbReference type="Gene3D" id="2.40.50.100">
    <property type="match status" value="1"/>
</dbReference>
<dbReference type="Gene3D" id="4.10.860.120">
    <property type="entry name" value="RNA polymerase II, clamp domain"/>
    <property type="match status" value="1"/>
</dbReference>
<dbReference type="Gene3D" id="1.10.274.100">
    <property type="entry name" value="RNA polymerase Rpb1, domain 3"/>
    <property type="match status" value="1"/>
</dbReference>
<dbReference type="HAMAP" id="MF_01322">
    <property type="entry name" value="RNApol_bact_RpoC"/>
    <property type="match status" value="1"/>
</dbReference>
<dbReference type="InterPro" id="IPR045867">
    <property type="entry name" value="DNA-dir_RpoC_beta_prime"/>
</dbReference>
<dbReference type="InterPro" id="IPR012754">
    <property type="entry name" value="DNA-dir_RpoC_beta_prime_bact"/>
</dbReference>
<dbReference type="InterPro" id="IPR000722">
    <property type="entry name" value="RNA_pol_asu"/>
</dbReference>
<dbReference type="InterPro" id="IPR006592">
    <property type="entry name" value="RNA_pol_N"/>
</dbReference>
<dbReference type="InterPro" id="IPR007080">
    <property type="entry name" value="RNA_pol_Rpb1_1"/>
</dbReference>
<dbReference type="InterPro" id="IPR007066">
    <property type="entry name" value="RNA_pol_Rpb1_3"/>
</dbReference>
<dbReference type="InterPro" id="IPR042102">
    <property type="entry name" value="RNA_pol_Rpb1_3_sf"/>
</dbReference>
<dbReference type="InterPro" id="IPR007083">
    <property type="entry name" value="RNA_pol_Rpb1_4"/>
</dbReference>
<dbReference type="InterPro" id="IPR007081">
    <property type="entry name" value="RNA_pol_Rpb1_5"/>
</dbReference>
<dbReference type="InterPro" id="IPR044893">
    <property type="entry name" value="RNA_pol_Rpb1_clamp_domain"/>
</dbReference>
<dbReference type="InterPro" id="IPR038120">
    <property type="entry name" value="Rpb1_funnel_sf"/>
</dbReference>
<dbReference type="NCBIfam" id="TIGR02386">
    <property type="entry name" value="rpoC_TIGR"/>
    <property type="match status" value="1"/>
</dbReference>
<dbReference type="PANTHER" id="PTHR19376">
    <property type="entry name" value="DNA-DIRECTED RNA POLYMERASE"/>
    <property type="match status" value="1"/>
</dbReference>
<dbReference type="PANTHER" id="PTHR19376:SF54">
    <property type="entry name" value="DNA-DIRECTED RNA POLYMERASE SUBUNIT BETA"/>
    <property type="match status" value="1"/>
</dbReference>
<dbReference type="Pfam" id="PF04997">
    <property type="entry name" value="RNA_pol_Rpb1_1"/>
    <property type="match status" value="1"/>
</dbReference>
<dbReference type="Pfam" id="PF00623">
    <property type="entry name" value="RNA_pol_Rpb1_2"/>
    <property type="match status" value="2"/>
</dbReference>
<dbReference type="Pfam" id="PF04983">
    <property type="entry name" value="RNA_pol_Rpb1_3"/>
    <property type="match status" value="1"/>
</dbReference>
<dbReference type="Pfam" id="PF05000">
    <property type="entry name" value="RNA_pol_Rpb1_4"/>
    <property type="match status" value="1"/>
</dbReference>
<dbReference type="Pfam" id="PF04998">
    <property type="entry name" value="RNA_pol_Rpb1_5"/>
    <property type="match status" value="1"/>
</dbReference>
<dbReference type="SMART" id="SM00663">
    <property type="entry name" value="RPOLA_N"/>
    <property type="match status" value="1"/>
</dbReference>
<dbReference type="SUPFAM" id="SSF64484">
    <property type="entry name" value="beta and beta-prime subunits of DNA dependent RNA-polymerase"/>
    <property type="match status" value="1"/>
</dbReference>